<evidence type="ECO:0000250" key="1">
    <source>
        <dbReference type="UniProtKB" id="P0CG30"/>
    </source>
</evidence>
<evidence type="ECO:0000250" key="2">
    <source>
        <dbReference type="UniProtKB" id="P30713"/>
    </source>
</evidence>
<evidence type="ECO:0000269" key="3">
    <source>
    </source>
</evidence>
<evidence type="ECO:0000269" key="4">
    <source>
    </source>
</evidence>
<evidence type="ECO:0000305" key="5"/>
<evidence type="ECO:0007829" key="6">
    <source>
        <dbReference type="PDB" id="4MPF"/>
    </source>
</evidence>
<accession>P0CG29</accession>
<accession>O60665</accession>
<accession>P30712</accession>
<accession>Q6IPV7</accession>
<accession>Q9HD76</accession>
<reference key="1">
    <citation type="journal article" date="2000" name="Pharmacogenetics">
        <title>Characterization of the glutathione S-transferase GSTT1 deletion: discrimination of all genotypes by polymerase chain reaction indicates a trimodular genotype-phenotype correlation.</title>
        <authorList>
            <person name="Sprenger R."/>
            <person name="Schlagenhaufer R."/>
            <person name="Kerb R."/>
            <person name="Bruhn C."/>
            <person name="Brockmoeller J."/>
            <person name="Roots I."/>
            <person name="Brinkmann U."/>
        </authorList>
    </citation>
    <scope>NUCLEOTIDE SEQUENCE [GENOMIC DNA]</scope>
</reference>
<reference key="2">
    <citation type="journal article" date="1999" name="Nature">
        <title>The DNA sequence of human chromosome 22.</title>
        <authorList>
            <person name="Dunham I."/>
            <person name="Hunt A.R."/>
            <person name="Collins J.E."/>
            <person name="Bruskiewich R."/>
            <person name="Beare D.M."/>
            <person name="Clamp M."/>
            <person name="Smink L.J."/>
            <person name="Ainscough R."/>
            <person name="Almeida J.P."/>
            <person name="Babbage A.K."/>
            <person name="Bagguley C."/>
            <person name="Bailey J."/>
            <person name="Barlow K.F."/>
            <person name="Bates K.N."/>
            <person name="Beasley O.P."/>
            <person name="Bird C.P."/>
            <person name="Blakey S.E."/>
            <person name="Bridgeman A.M."/>
            <person name="Buck D."/>
            <person name="Burgess J."/>
            <person name="Burrill W.D."/>
            <person name="Burton J."/>
            <person name="Carder C."/>
            <person name="Carter N.P."/>
            <person name="Chen Y."/>
            <person name="Clark G."/>
            <person name="Clegg S.M."/>
            <person name="Cobley V.E."/>
            <person name="Cole C.G."/>
            <person name="Collier R.E."/>
            <person name="Connor R."/>
            <person name="Conroy D."/>
            <person name="Corby N.R."/>
            <person name="Coville G.J."/>
            <person name="Cox A.V."/>
            <person name="Davis J."/>
            <person name="Dawson E."/>
            <person name="Dhami P.D."/>
            <person name="Dockree C."/>
            <person name="Dodsworth S.J."/>
            <person name="Durbin R.M."/>
            <person name="Ellington A.G."/>
            <person name="Evans K.L."/>
            <person name="Fey J.M."/>
            <person name="Fleming K."/>
            <person name="French L."/>
            <person name="Garner A.A."/>
            <person name="Gilbert J.G.R."/>
            <person name="Goward M.E."/>
            <person name="Grafham D.V."/>
            <person name="Griffiths M.N.D."/>
            <person name="Hall C."/>
            <person name="Hall R.E."/>
            <person name="Hall-Tamlyn G."/>
            <person name="Heathcott R.W."/>
            <person name="Ho S."/>
            <person name="Holmes S."/>
            <person name="Hunt S.E."/>
            <person name="Jones M.C."/>
            <person name="Kershaw J."/>
            <person name="Kimberley A.M."/>
            <person name="King A."/>
            <person name="Laird G.K."/>
            <person name="Langford C.F."/>
            <person name="Leversha M.A."/>
            <person name="Lloyd C."/>
            <person name="Lloyd D.M."/>
            <person name="Martyn I.D."/>
            <person name="Mashreghi-Mohammadi M."/>
            <person name="Matthews L.H."/>
            <person name="Mccann O.T."/>
            <person name="Mcclay J."/>
            <person name="Mclaren S."/>
            <person name="McMurray A.A."/>
            <person name="Milne S.A."/>
            <person name="Mortimore B.J."/>
            <person name="Odell C.N."/>
            <person name="Pavitt R."/>
            <person name="Pearce A.V."/>
            <person name="Pearson D."/>
            <person name="Phillimore B.J.C.T."/>
            <person name="Phillips S.H."/>
            <person name="Plumb R.W."/>
            <person name="Ramsay H."/>
            <person name="Ramsey Y."/>
            <person name="Rogers L."/>
            <person name="Ross M.T."/>
            <person name="Scott C.E."/>
            <person name="Sehra H.K."/>
            <person name="Skuce C.D."/>
            <person name="Smalley S."/>
            <person name="Smith M.L."/>
            <person name="Soderlund C."/>
            <person name="Spragon L."/>
            <person name="Steward C.A."/>
            <person name="Sulston J.E."/>
            <person name="Swann R.M."/>
            <person name="Vaudin M."/>
            <person name="Wall M."/>
            <person name="Wallis J.M."/>
            <person name="Whiteley M.N."/>
            <person name="Willey D.L."/>
            <person name="Williams L."/>
            <person name="Williams S.A."/>
            <person name="Williamson H."/>
            <person name="Wilmer T.E."/>
            <person name="Wilming L."/>
            <person name="Wright C.L."/>
            <person name="Hubbard T."/>
            <person name="Bentley D.R."/>
            <person name="Beck S."/>
            <person name="Rogers J."/>
            <person name="Shimizu N."/>
            <person name="Minoshima S."/>
            <person name="Kawasaki K."/>
            <person name="Sasaki T."/>
            <person name="Asakawa S."/>
            <person name="Kudoh J."/>
            <person name="Shintani A."/>
            <person name="Shibuya K."/>
            <person name="Yoshizaki Y."/>
            <person name="Aoki N."/>
            <person name="Mitsuyama S."/>
            <person name="Roe B.A."/>
            <person name="Chen F."/>
            <person name="Chu L."/>
            <person name="Crabtree J."/>
            <person name="Deschamps S."/>
            <person name="Do A."/>
            <person name="Do T."/>
            <person name="Dorman A."/>
            <person name="Fang F."/>
            <person name="Fu Y."/>
            <person name="Hu P."/>
            <person name="Hua A."/>
            <person name="Kenton S."/>
            <person name="Lai H."/>
            <person name="Lao H.I."/>
            <person name="Lewis J."/>
            <person name="Lewis S."/>
            <person name="Lin S.-P."/>
            <person name="Loh P."/>
            <person name="Malaj E."/>
            <person name="Nguyen T."/>
            <person name="Pan H."/>
            <person name="Phan S."/>
            <person name="Qi S."/>
            <person name="Qian Y."/>
            <person name="Ray L."/>
            <person name="Ren Q."/>
            <person name="Shaull S."/>
            <person name="Sloan D."/>
            <person name="Song L."/>
            <person name="Wang Q."/>
            <person name="Wang Y."/>
            <person name="Wang Z."/>
            <person name="White J."/>
            <person name="Willingham D."/>
            <person name="Wu H."/>
            <person name="Yao Z."/>
            <person name="Zhan M."/>
            <person name="Zhang G."/>
            <person name="Chissoe S."/>
            <person name="Murray J."/>
            <person name="Miller N."/>
            <person name="Minx P."/>
            <person name="Fulton R."/>
            <person name="Johnson D."/>
            <person name="Bemis G."/>
            <person name="Bentley D."/>
            <person name="Bradshaw H."/>
            <person name="Bourne S."/>
            <person name="Cordes M."/>
            <person name="Du Z."/>
            <person name="Fulton L."/>
            <person name="Goela D."/>
            <person name="Graves T."/>
            <person name="Hawkins J."/>
            <person name="Hinds K."/>
            <person name="Kemp K."/>
            <person name="Latreille P."/>
            <person name="Layman D."/>
            <person name="Ozersky P."/>
            <person name="Rohlfing T."/>
            <person name="Scheet P."/>
            <person name="Walker C."/>
            <person name="Wamsley A."/>
            <person name="Wohldmann P."/>
            <person name="Pepin K."/>
            <person name="Nelson J."/>
            <person name="Korf I."/>
            <person name="Bedell J.A."/>
            <person name="Hillier L.W."/>
            <person name="Mardis E."/>
            <person name="Waterston R."/>
            <person name="Wilson R."/>
            <person name="Emanuel B.S."/>
            <person name="Shaikh T."/>
            <person name="Kurahashi H."/>
            <person name="Saitta S."/>
            <person name="Budarf M.L."/>
            <person name="McDermid H.E."/>
            <person name="Johnson A."/>
            <person name="Wong A.C.C."/>
            <person name="Morrow B.E."/>
            <person name="Edelmann L."/>
            <person name="Kim U.J."/>
            <person name="Shizuya H."/>
            <person name="Simon M.I."/>
            <person name="Dumanski J.P."/>
            <person name="Peyrard M."/>
            <person name="Kedra D."/>
            <person name="Seroussi E."/>
            <person name="Fransson I."/>
            <person name="Tapia I."/>
            <person name="Bruder C.E."/>
            <person name="O'Brien K.P."/>
            <person name="Wilkinson P."/>
            <person name="Bodenteich A."/>
            <person name="Hartman K."/>
            <person name="Hu X."/>
            <person name="Khan A.S."/>
            <person name="Lane L."/>
            <person name="Tilahun Y."/>
            <person name="Wright H."/>
        </authorList>
    </citation>
    <scope>NUCLEOTIDE SEQUENCE [LARGE SCALE GENOMIC DNA]</scope>
</reference>
<reference key="3">
    <citation type="journal article" date="1992" name="Biochem. J.">
        <title>Characterization of a human class-theta glutathione S-transferase with activity towards 1-menaphthyl sulphate.</title>
        <authorList>
            <person name="Hussey A.J."/>
            <person name="Hayes J.D."/>
        </authorList>
    </citation>
    <scope>PROTEIN SEQUENCE OF 2-21</scope>
    <scope>FUNCTION</scope>
    <scope>CATALYTIC ACTIVITY</scope>
    <scope>SUBCELLULAR LOCATION</scope>
    <source>
        <tissue>Liver</tissue>
    </source>
</reference>
<reference key="4">
    <citation type="journal article" date="1996" name="Biochem. J.">
        <title>The distribution of theta-class glutathione S-transferases in the liver and lung of mouse, rat and human.</title>
        <authorList>
            <person name="Mainwaring G.W."/>
            <person name="Williams S.M."/>
            <person name="Foster J.R."/>
            <person name="Tugwood J."/>
            <person name="Green T."/>
        </authorList>
    </citation>
    <scope>TISSUE SPECIFICITY</scope>
    <source>
        <tissue>Liver</tissue>
        <tissue>Lung</tissue>
    </source>
</reference>
<organism>
    <name type="scientific">Homo sapiens</name>
    <name type="common">Human</name>
    <dbReference type="NCBI Taxonomy" id="9606"/>
    <lineage>
        <taxon>Eukaryota</taxon>
        <taxon>Metazoa</taxon>
        <taxon>Chordata</taxon>
        <taxon>Craniata</taxon>
        <taxon>Vertebrata</taxon>
        <taxon>Euteleostomi</taxon>
        <taxon>Mammalia</taxon>
        <taxon>Eutheria</taxon>
        <taxon>Euarchontoglires</taxon>
        <taxon>Primates</taxon>
        <taxon>Haplorrhini</taxon>
        <taxon>Catarrhini</taxon>
        <taxon>Hominidae</taxon>
        <taxon>Homo</taxon>
    </lineage>
</organism>
<gene>
    <name type="primary">GSTT2</name>
</gene>
<proteinExistence type="evidence at protein level"/>
<protein>
    <recommendedName>
        <fullName>Glutathione S-transferase theta-2</fullName>
        <ecNumber evidence="3">2.5.1.18</ecNumber>
    </recommendedName>
    <alternativeName>
        <fullName>GST class-theta-2</fullName>
    </alternativeName>
</protein>
<sequence length="244" mass="27506">MGLELFLDLVSQPSRAVYIFAKKNGIPLELRTVDLVKGQHKSKEFLQINSLGKLPTLKDGDFILTESSAILIYLSCKYQTPDHWYPSDLQARARVHEYLGWHADCIRGTFGIPLWVQVLGPLIGVQVPKEKVERNRTAMDQALQWLEDKFLGDRPFLAGQQVTLADLMALEELMQPVALGYELFEGRPRLAAWRGRVEAFLGAELCQEAHSIILSILEQAAKKTLPTPSPEAYQAMLLRIARIP</sequence>
<comment type="function">
    <text evidence="3">Conjugation of reduced glutathione to a wide number of exogenous and endogenous hydrophobic electrophiles (PubMed:1417752). Has a sulfatase activity (PubMed:1417752).</text>
</comment>
<comment type="catalytic activity">
    <reaction evidence="3">
        <text>RX + glutathione = an S-substituted glutathione + a halide anion + H(+)</text>
        <dbReference type="Rhea" id="RHEA:16437"/>
        <dbReference type="ChEBI" id="CHEBI:15378"/>
        <dbReference type="ChEBI" id="CHEBI:16042"/>
        <dbReference type="ChEBI" id="CHEBI:17792"/>
        <dbReference type="ChEBI" id="CHEBI:57925"/>
        <dbReference type="ChEBI" id="CHEBI:90779"/>
        <dbReference type="EC" id="2.5.1.18"/>
    </reaction>
</comment>
<comment type="subunit">
    <text evidence="2">Homodimer.</text>
</comment>
<comment type="subcellular location">
    <subcellularLocation>
        <location evidence="3">Cytoplasm</location>
        <location evidence="3">Cytosol</location>
    </subcellularLocation>
    <subcellularLocation>
        <location evidence="2">Nucleus</location>
    </subcellularLocation>
</comment>
<comment type="tissue specificity">
    <text evidence="4">Expressed at low levels in liver. In lung, expressed at low levels in ciliated bronchiolar cells, alveolar macrophages and alveolar type II cells.</text>
</comment>
<comment type="similarity">
    <text evidence="5">Belongs to the GST superfamily. Theta family.</text>
</comment>
<dbReference type="EC" id="2.5.1.18" evidence="3"/>
<dbReference type="EMBL" id="AF240786">
    <property type="protein sequence ID" value="AAG02373.1"/>
    <property type="molecule type" value="Genomic_DNA"/>
</dbReference>
<dbReference type="EMBL" id="AP000351">
    <property type="status" value="NOT_ANNOTATED_CDS"/>
    <property type="molecule type" value="Genomic_DNA"/>
</dbReference>
<dbReference type="PIR" id="A56847">
    <property type="entry name" value="A56847"/>
</dbReference>
<dbReference type="RefSeq" id="NP_000845.2">
    <property type="nucleotide sequence ID" value="NM_000854.5"/>
</dbReference>
<dbReference type="PDB" id="4MPF">
    <property type="method" value="X-ray"/>
    <property type="resolution" value="2.10 A"/>
    <property type="chains" value="A/B=1-244"/>
</dbReference>
<dbReference type="PDBsum" id="4MPF"/>
<dbReference type="SMR" id="P0CG29"/>
<dbReference type="FunCoup" id="P0CG29">
    <property type="interactions" value="204"/>
</dbReference>
<dbReference type="IntAct" id="P0CG29">
    <property type="interactions" value="3"/>
</dbReference>
<dbReference type="MINT" id="P0CG29"/>
<dbReference type="ChEMBL" id="CHEMBL2142"/>
<dbReference type="DrugBank" id="DB00321">
    <property type="generic name" value="Amitriptyline"/>
</dbReference>
<dbReference type="DrugBank" id="DB00291">
    <property type="generic name" value="Chlorambucil"/>
</dbReference>
<dbReference type="DrugBank" id="DB03619">
    <property type="generic name" value="Deoxycholic acid"/>
</dbReference>
<dbReference type="DrugBank" id="DB03310">
    <property type="generic name" value="Glutathione disulfide"/>
</dbReference>
<dbReference type="DrugBank" id="DB14924">
    <property type="generic name" value="Ritlecitinib"/>
</dbReference>
<dbReference type="DrugBank" id="DB04132">
    <property type="generic name" value="S-Hexylglutathione"/>
</dbReference>
<dbReference type="GlyGen" id="P0CG29">
    <property type="glycosylation" value="1 site"/>
</dbReference>
<dbReference type="iPTMnet" id="P0CG29"/>
<dbReference type="PhosphoSitePlus" id="P0CG29"/>
<dbReference type="BioMuta" id="GSTT2"/>
<dbReference type="DMDM" id="300680960"/>
<dbReference type="jPOST" id="P0CG29"/>
<dbReference type="MassIVE" id="P0CG29"/>
<dbReference type="PeptideAtlas" id="P0CG29"/>
<dbReference type="ProteomicsDB" id="52459"/>
<dbReference type="Pumba" id="P0CG29"/>
<dbReference type="DNASU" id="2953"/>
<dbReference type="Ensembl" id="ENST00000618279.3">
    <property type="protein sequence ID" value="ENSP00000477540.1"/>
    <property type="gene ID" value="ENSG00000277897.3"/>
</dbReference>
<dbReference type="GeneID" id="2953"/>
<dbReference type="KEGG" id="hsa:2953"/>
<dbReference type="MANE-Select" id="ENST00000618279.3">
    <property type="protein sequence ID" value="ENSP00000477540.1"/>
    <property type="RefSeq nucleotide sequence ID" value="NM_000854.5"/>
    <property type="RefSeq protein sequence ID" value="NP_000845.2"/>
</dbReference>
<dbReference type="UCSC" id="uc032qyg.2">
    <property type="organism name" value="human"/>
</dbReference>
<dbReference type="AGR" id="HGNC:4642"/>
<dbReference type="CTD" id="2953"/>
<dbReference type="DisGeNET" id="2953"/>
<dbReference type="GeneCards" id="GSTT2"/>
<dbReference type="HGNC" id="HGNC:4642">
    <property type="gene designation" value="GSTT2"/>
</dbReference>
<dbReference type="MIM" id="600437">
    <property type="type" value="gene"/>
</dbReference>
<dbReference type="neXtProt" id="NX_P0CG29"/>
<dbReference type="InParanoid" id="P0CG29"/>
<dbReference type="OrthoDB" id="2133at9604"/>
<dbReference type="PAN-GO" id="P0CG29">
    <property type="GO annotations" value="3 GO annotations based on evolutionary models"/>
</dbReference>
<dbReference type="PhylomeDB" id="P0CG29"/>
<dbReference type="TreeFam" id="TF325759"/>
<dbReference type="PathwayCommons" id="P0CG29"/>
<dbReference type="Reactome" id="R-HSA-156590">
    <property type="pathway name" value="Glutathione conjugation"/>
</dbReference>
<dbReference type="SignaLink" id="P0CG29"/>
<dbReference type="BioGRID-ORCS" id="2953">
    <property type="hits" value="13 hits in 966 CRISPR screens"/>
</dbReference>
<dbReference type="EvolutionaryTrace" id="P0CG29"/>
<dbReference type="GenomeRNAi" id="2953"/>
<dbReference type="Pharos" id="P0CG29">
    <property type="development level" value="Tdark"/>
</dbReference>
<dbReference type="PRO" id="PR:P0CG29"/>
<dbReference type="Proteomes" id="UP000005640">
    <property type="component" value="Unplaced"/>
</dbReference>
<dbReference type="RNAct" id="P0CG29">
    <property type="molecule type" value="protein"/>
</dbReference>
<dbReference type="GO" id="GO:0005737">
    <property type="term" value="C:cytoplasm"/>
    <property type="evidence" value="ECO:0000318"/>
    <property type="project" value="GO_Central"/>
</dbReference>
<dbReference type="GO" id="GO:0005829">
    <property type="term" value="C:cytosol"/>
    <property type="evidence" value="ECO:0000314"/>
    <property type="project" value="UniProtKB"/>
</dbReference>
<dbReference type="GO" id="GO:0070062">
    <property type="term" value="C:extracellular exosome"/>
    <property type="evidence" value="ECO:0007005"/>
    <property type="project" value="UniProtKB"/>
</dbReference>
<dbReference type="GO" id="GO:0005634">
    <property type="term" value="C:nucleus"/>
    <property type="evidence" value="ECO:0007669"/>
    <property type="project" value="UniProtKB-SubCell"/>
</dbReference>
<dbReference type="GO" id="GO:0004364">
    <property type="term" value="F:glutathione transferase activity"/>
    <property type="evidence" value="ECO:0000314"/>
    <property type="project" value="UniProtKB"/>
</dbReference>
<dbReference type="GO" id="GO:0006749">
    <property type="term" value="P:glutathione metabolic process"/>
    <property type="evidence" value="ECO:0000318"/>
    <property type="project" value="GO_Central"/>
</dbReference>
<dbReference type="CDD" id="cd03183">
    <property type="entry name" value="GST_C_Theta"/>
    <property type="match status" value="1"/>
</dbReference>
<dbReference type="CDD" id="cd03050">
    <property type="entry name" value="GST_N_Theta"/>
    <property type="match status" value="1"/>
</dbReference>
<dbReference type="FunFam" id="3.40.30.10:FF:000086">
    <property type="entry name" value="Glutathione S-transferase theta-1"/>
    <property type="match status" value="1"/>
</dbReference>
<dbReference type="FunFam" id="1.20.1050.10:FF:000200">
    <property type="entry name" value="Glutathione S-transferase theta-2B"/>
    <property type="match status" value="1"/>
</dbReference>
<dbReference type="Gene3D" id="1.20.1050.10">
    <property type="match status" value="1"/>
</dbReference>
<dbReference type="Gene3D" id="3.40.30.10">
    <property type="entry name" value="Glutaredoxin"/>
    <property type="match status" value="1"/>
</dbReference>
<dbReference type="InterPro" id="IPR010987">
    <property type="entry name" value="Glutathione-S-Trfase_C-like"/>
</dbReference>
<dbReference type="InterPro" id="IPR036282">
    <property type="entry name" value="Glutathione-S-Trfase_C_sf"/>
</dbReference>
<dbReference type="InterPro" id="IPR040079">
    <property type="entry name" value="Glutathione_S-Trfase"/>
</dbReference>
<dbReference type="InterPro" id="IPR004045">
    <property type="entry name" value="Glutathione_S-Trfase_N"/>
</dbReference>
<dbReference type="InterPro" id="IPR004046">
    <property type="entry name" value="GST_C"/>
</dbReference>
<dbReference type="InterPro" id="IPR040077">
    <property type="entry name" value="GST_C_Theta"/>
</dbReference>
<dbReference type="InterPro" id="IPR040075">
    <property type="entry name" value="GST_N_Theta"/>
</dbReference>
<dbReference type="InterPro" id="IPR051369">
    <property type="entry name" value="GST_Theta"/>
</dbReference>
<dbReference type="InterPro" id="IPR036249">
    <property type="entry name" value="Thioredoxin-like_sf"/>
</dbReference>
<dbReference type="PANTHER" id="PTHR43917">
    <property type="match status" value="1"/>
</dbReference>
<dbReference type="PANTHER" id="PTHR43917:SF4">
    <property type="entry name" value="GLUTATHIONE S-TRANSFERASE THETA-2-RELATED"/>
    <property type="match status" value="1"/>
</dbReference>
<dbReference type="Pfam" id="PF00043">
    <property type="entry name" value="GST_C"/>
    <property type="match status" value="1"/>
</dbReference>
<dbReference type="Pfam" id="PF02798">
    <property type="entry name" value="GST_N"/>
    <property type="match status" value="1"/>
</dbReference>
<dbReference type="SFLD" id="SFLDS00019">
    <property type="entry name" value="Glutathione_Transferase_(cytos"/>
    <property type="match status" value="1"/>
</dbReference>
<dbReference type="SFLD" id="SFLDG01153">
    <property type="entry name" value="Main.4:_Theta-like"/>
    <property type="match status" value="1"/>
</dbReference>
<dbReference type="SUPFAM" id="SSF47616">
    <property type="entry name" value="GST C-terminal domain-like"/>
    <property type="match status" value="1"/>
</dbReference>
<dbReference type="SUPFAM" id="SSF52833">
    <property type="entry name" value="Thioredoxin-like"/>
    <property type="match status" value="1"/>
</dbReference>
<dbReference type="PROSITE" id="PS50405">
    <property type="entry name" value="GST_CTER"/>
    <property type="match status" value="1"/>
</dbReference>
<dbReference type="PROSITE" id="PS50404">
    <property type="entry name" value="GST_NTER"/>
    <property type="match status" value="1"/>
</dbReference>
<name>GST2_HUMAN</name>
<feature type="initiator methionine" description="Removed" evidence="3">
    <location>
        <position position="1"/>
    </location>
</feature>
<feature type="chain" id="PRO_0000185939" description="Glutathione S-transferase theta-2">
    <location>
        <begin position="2"/>
        <end position="244"/>
    </location>
</feature>
<feature type="domain" description="GST N-terminal">
    <location>
        <begin position="2"/>
        <end position="82"/>
    </location>
</feature>
<feature type="domain" description="GST C-terminal">
    <location>
        <begin position="88"/>
        <end position="224"/>
    </location>
</feature>
<feature type="binding site" evidence="1">
    <location>
        <begin position="40"/>
        <end position="41"/>
    </location>
    <ligand>
        <name>glutathione</name>
        <dbReference type="ChEBI" id="CHEBI:57925"/>
    </ligand>
</feature>
<feature type="binding site" evidence="1">
    <location>
        <begin position="53"/>
        <end position="54"/>
    </location>
    <ligand>
        <name>glutathione</name>
        <dbReference type="ChEBI" id="CHEBI:57925"/>
    </ligand>
</feature>
<feature type="binding site" evidence="1">
    <location>
        <begin position="66"/>
        <end position="67"/>
    </location>
    <ligand>
        <name>glutathione</name>
        <dbReference type="ChEBI" id="CHEBI:57925"/>
    </ligand>
</feature>
<feature type="binding site" evidence="1">
    <location>
        <begin position="104"/>
        <end position="107"/>
    </location>
    <ligand>
        <name>glutathione</name>
        <dbReference type="ChEBI" id="CHEBI:57925"/>
    </ligand>
</feature>
<feature type="sequence conflict" description="In Ref. 3; AA sequence." evidence="5" ref="3">
    <original>G</original>
    <variation>V</variation>
    <location>
        <position position="2"/>
    </location>
</feature>
<feature type="strand" evidence="6">
    <location>
        <begin position="3"/>
        <end position="7"/>
    </location>
</feature>
<feature type="helix" evidence="6">
    <location>
        <begin position="12"/>
        <end position="23"/>
    </location>
</feature>
<feature type="strand" evidence="6">
    <location>
        <begin position="28"/>
        <end position="32"/>
    </location>
</feature>
<feature type="turn" evidence="6">
    <location>
        <begin position="35"/>
        <end position="38"/>
    </location>
</feature>
<feature type="helix" evidence="6">
    <location>
        <begin position="39"/>
        <end position="41"/>
    </location>
</feature>
<feature type="helix" evidence="6">
    <location>
        <begin position="43"/>
        <end position="46"/>
    </location>
</feature>
<feature type="strand" evidence="6">
    <location>
        <begin position="56"/>
        <end position="59"/>
    </location>
</feature>
<feature type="strand" evidence="6">
    <location>
        <begin position="62"/>
        <end position="65"/>
    </location>
</feature>
<feature type="helix" evidence="6">
    <location>
        <begin position="67"/>
        <end position="77"/>
    </location>
</feature>
<feature type="helix" evidence="6">
    <location>
        <begin position="82"/>
        <end position="84"/>
    </location>
</feature>
<feature type="helix" evidence="6">
    <location>
        <begin position="89"/>
        <end position="105"/>
    </location>
</feature>
<feature type="turn" evidence="6">
    <location>
        <begin position="106"/>
        <end position="111"/>
    </location>
</feature>
<feature type="helix" evidence="6">
    <location>
        <begin position="112"/>
        <end position="117"/>
    </location>
</feature>
<feature type="helix" evidence="6">
    <location>
        <begin position="119"/>
        <end position="122"/>
    </location>
</feature>
<feature type="helix" evidence="6">
    <location>
        <begin position="129"/>
        <end position="148"/>
    </location>
</feature>
<feature type="turn" evidence="6">
    <location>
        <begin position="149"/>
        <end position="153"/>
    </location>
</feature>
<feature type="strand" evidence="6">
    <location>
        <begin position="154"/>
        <end position="156"/>
    </location>
</feature>
<feature type="strand" evidence="6">
    <location>
        <begin position="159"/>
        <end position="161"/>
    </location>
</feature>
<feature type="helix" evidence="6">
    <location>
        <begin position="164"/>
        <end position="177"/>
    </location>
</feature>
<feature type="turn" evidence="6">
    <location>
        <begin position="178"/>
        <end position="180"/>
    </location>
</feature>
<feature type="turn" evidence="6">
    <location>
        <begin position="183"/>
        <end position="186"/>
    </location>
</feature>
<feature type="helix" evidence="6">
    <location>
        <begin position="188"/>
        <end position="201"/>
    </location>
</feature>
<feature type="helix" evidence="6">
    <location>
        <begin position="203"/>
        <end position="214"/>
    </location>
</feature>
<feature type="helix" evidence="6">
    <location>
        <begin position="216"/>
        <end position="221"/>
    </location>
</feature>
<feature type="helix" evidence="6">
    <location>
        <begin position="230"/>
        <end position="241"/>
    </location>
</feature>
<keyword id="KW-0002">3D-structure</keyword>
<keyword id="KW-0963">Cytoplasm</keyword>
<keyword id="KW-0903">Direct protein sequencing</keyword>
<keyword id="KW-0539">Nucleus</keyword>
<keyword id="KW-1185">Reference proteome</keyword>
<keyword id="KW-0808">Transferase</keyword>